<reference key="1">
    <citation type="submission" date="2019-04" db="EMBL/GenBank/DDBJ databases">
        <authorList>
            <person name="Gilchrist C.L.M."/>
            <person name="Chooi Y.H."/>
        </authorList>
    </citation>
    <scope>NUCLEOTIDE SEQUENCE [LARGE SCALE GENOMIC DNA]</scope>
    <source>
        <strain>FRR 3425 / CBS 142004 / DTO 360-G7</strain>
    </source>
</reference>
<reference key="2">
    <citation type="journal article" date="2021" name="Org. Biomol. Chem.">
        <title>Hancockiamides: phenylpropanoid piperazines from Aspergillus hancockii are biosynthesised by a versatile dual single-module NRPS pathway.</title>
        <authorList>
            <person name="Li H."/>
            <person name="Lacey A.E."/>
            <person name="Shu S."/>
            <person name="Kalaitzis J.A."/>
            <person name="Vuong D."/>
            <person name="Crombie A."/>
            <person name="Hu J."/>
            <person name="Gilchrist C.L.M."/>
            <person name="Lacey E."/>
            <person name="Piggott A.M."/>
            <person name="Chooi Y.H."/>
        </authorList>
    </citation>
    <scope>FUNCTION</scope>
    <scope>DOMAIN</scope>
    <scope>CATALYTIC ACTIVITY</scope>
    <scope>PATHWAY</scope>
    <scope>BIOTECHNOLOGY</scope>
</reference>
<accession>P0DUL9</accession>
<sequence>MTVPATTKDPRDSLLDSPLVHFPSLPRDSYLPHPTEHTVVSIDDEEILPSTRSSLHDVLQVAWSLVLADQTSSPEVVFGMAYDGRTTDDGEQAIMPFRLRLRAEDSVQEALAAAAAVTLQMRQWEHMGLRRFSTMSPQNVVLCQFRNLFVIDHKDPTEDCVERSCTSYSKGYALTVLCEIVDQVIHVHAMFDPLVLPPGQLRLILHQFGDILKTCLRGPPGRVKDLQQIGPDGLNYIYEWNRGGERDEGIVCVHQLIEDRFKQAPFAAAVCAWDGALTYGELDRWAKRIAAQLVEAGVKPGSFVGIYMQKSVLAVVAMVAIVKAGAAFIFLPPFLPTVRLQLMCQRTPVELVLSVATLLRSASDLSVPVQVLDYRAKDEEETAATSGGSEIAQPNHPLYAIFTSGSTGEPKGVVVDRASFGPGVREYCRRAQLGPNSRLFQSVSYAFIVSIFEQLISLALGACICVPSEEQLQNDMEGAMCRYQATWGCMTPSVARTLKPERLSCLKTLALTGEPVNQSDMEQWKDHVNLYTLYGQSETGSTLLINSITGSLADSRGLGRPSTGACWIVDPEDPTTLRPLGAEGELLIETTALARGYMNNLEESARTFIEMPKWLKQLRPQGHRSRCLLTGDIVRYYDTDGTIRLLSRKGTGAKIRGQRVELGEIEHHLRPKFPDARHILVDVVCPAKAGTGHSILVAFVHGPWKDTEKTGELATATSEFRQQARRVIAELRQVLPSFMVPSAIVPLADVPTTATGKVHRKSLRERMSALTVAEILAYNQEDRSAYRAPTTEQEALLLSICAELLYLPASSISLDNSFFQVGGDSLNARQLAAKVRSHGFSLLATDIFEASTLASLASRMRQYNQTDSEVSTAPEGDPFEGLKQELLGELPSSLVKENVEDVYPASDMQARAIRTHMLDYFPFEIKGQLDRHQLQHACETLIRRTPVMRSVFINFRGKMLQVTLRSVAIPYKELTIPTGEDPLSWARLHIAEDKKKTAAFDRPTIRFTLCRQSLQHHIFIVRLPHAIYDGSCLEQVAKQISAAYNAQTLPEAPDFAAYARRCARLRTPSAMDFWRNFLAESEVTRLPHASKGDEVAVIYPGECSPRSPPPGITMATAIKAAWAWVLHKRTGKLDVLFGQVGSTRGIDIPGATDIIGLCLNITAVRVQFAGLQTVEDLLRMLQQQHMRALMYETADWTDIVANASSWPEGTELDSVVLHENFGGLPALDLGDAIGEMADPIFSLSTSNPLTLVTWPSTQTLTSFLLTRENVFQKEYAEGLVTEFNQTLVQFLDFPESSLCSISTCG</sequence>
<name>HKM11_ASPHA</name>
<keyword id="KW-0436">Ligase</keyword>
<keyword id="KW-0596">Phosphopantetheine</keyword>
<keyword id="KW-0597">Phosphoprotein</keyword>
<evidence type="ECO:0000255" key="1"/>
<evidence type="ECO:0000255" key="2">
    <source>
        <dbReference type="PROSITE-ProRule" id="PRU00258"/>
    </source>
</evidence>
<evidence type="ECO:0000269" key="3">
    <source>
    </source>
</evidence>
<evidence type="ECO:0000303" key="4">
    <source>
    </source>
</evidence>
<evidence type="ECO:0000305" key="5"/>
<evidence type="ECO:0000305" key="6">
    <source>
    </source>
</evidence>
<proteinExistence type="evidence at protein level"/>
<dbReference type="EC" id="6.3.2.-" evidence="3"/>
<dbReference type="EMBL" id="MBFL02000005">
    <property type="protein sequence ID" value="KAF7597139.1"/>
    <property type="molecule type" value="Genomic_DNA"/>
</dbReference>
<dbReference type="SMR" id="P0DUL9"/>
<dbReference type="OrthoDB" id="416786at2759"/>
<dbReference type="GO" id="GO:0005737">
    <property type="term" value="C:cytoplasm"/>
    <property type="evidence" value="ECO:0007669"/>
    <property type="project" value="TreeGrafter"/>
</dbReference>
<dbReference type="GO" id="GO:0016874">
    <property type="term" value="F:ligase activity"/>
    <property type="evidence" value="ECO:0007669"/>
    <property type="project" value="UniProtKB-KW"/>
</dbReference>
<dbReference type="GO" id="GO:0031177">
    <property type="term" value="F:phosphopantetheine binding"/>
    <property type="evidence" value="ECO:0007669"/>
    <property type="project" value="InterPro"/>
</dbReference>
<dbReference type="GO" id="GO:0043041">
    <property type="term" value="P:amino acid activation for nonribosomal peptide biosynthetic process"/>
    <property type="evidence" value="ECO:0007669"/>
    <property type="project" value="TreeGrafter"/>
</dbReference>
<dbReference type="GO" id="GO:0044550">
    <property type="term" value="P:secondary metabolite biosynthetic process"/>
    <property type="evidence" value="ECO:0007669"/>
    <property type="project" value="TreeGrafter"/>
</dbReference>
<dbReference type="CDD" id="cd05918">
    <property type="entry name" value="A_NRPS_SidN3_like"/>
    <property type="match status" value="1"/>
</dbReference>
<dbReference type="Gene3D" id="3.30.300.30">
    <property type="match status" value="1"/>
</dbReference>
<dbReference type="Gene3D" id="1.10.1200.10">
    <property type="entry name" value="ACP-like"/>
    <property type="match status" value="1"/>
</dbReference>
<dbReference type="Gene3D" id="3.30.559.10">
    <property type="entry name" value="Chloramphenicol acetyltransferase-like domain"/>
    <property type="match status" value="1"/>
</dbReference>
<dbReference type="Gene3D" id="3.40.50.12780">
    <property type="entry name" value="N-terminal domain of ligase-like"/>
    <property type="match status" value="1"/>
</dbReference>
<dbReference type="Gene3D" id="3.30.559.30">
    <property type="entry name" value="Nonribosomal peptide synthetase, condensation domain"/>
    <property type="match status" value="2"/>
</dbReference>
<dbReference type="InterPro" id="IPR036736">
    <property type="entry name" value="ACP-like_sf"/>
</dbReference>
<dbReference type="InterPro" id="IPR045851">
    <property type="entry name" value="AMP-bd_C_sf"/>
</dbReference>
<dbReference type="InterPro" id="IPR000873">
    <property type="entry name" value="AMP-dep_synth/lig_dom"/>
</dbReference>
<dbReference type="InterPro" id="IPR042099">
    <property type="entry name" value="ANL_N_sf"/>
</dbReference>
<dbReference type="InterPro" id="IPR023213">
    <property type="entry name" value="CAT-like_dom_sf"/>
</dbReference>
<dbReference type="InterPro" id="IPR001242">
    <property type="entry name" value="Condensatn"/>
</dbReference>
<dbReference type="InterPro" id="IPR020806">
    <property type="entry name" value="PKS_PP-bd"/>
</dbReference>
<dbReference type="InterPro" id="IPR009081">
    <property type="entry name" value="PP-bd_ACP"/>
</dbReference>
<dbReference type="PANTHER" id="PTHR45527">
    <property type="entry name" value="NONRIBOSOMAL PEPTIDE SYNTHETASE"/>
    <property type="match status" value="1"/>
</dbReference>
<dbReference type="PANTHER" id="PTHR45527:SF3">
    <property type="entry name" value="SIDEROPHORE SYNTHETASE (EUROFUNG)"/>
    <property type="match status" value="1"/>
</dbReference>
<dbReference type="Pfam" id="PF00501">
    <property type="entry name" value="AMP-binding"/>
    <property type="match status" value="1"/>
</dbReference>
<dbReference type="Pfam" id="PF00668">
    <property type="entry name" value="Condensation"/>
    <property type="match status" value="1"/>
</dbReference>
<dbReference type="Pfam" id="PF00550">
    <property type="entry name" value="PP-binding"/>
    <property type="match status" value="1"/>
</dbReference>
<dbReference type="SMART" id="SM00823">
    <property type="entry name" value="PKS_PP"/>
    <property type="match status" value="1"/>
</dbReference>
<dbReference type="SUPFAM" id="SSF56801">
    <property type="entry name" value="Acetyl-CoA synthetase-like"/>
    <property type="match status" value="1"/>
</dbReference>
<dbReference type="SUPFAM" id="SSF47336">
    <property type="entry name" value="ACP-like"/>
    <property type="match status" value="1"/>
</dbReference>
<dbReference type="SUPFAM" id="SSF52777">
    <property type="entry name" value="CoA-dependent acyltransferases"/>
    <property type="match status" value="3"/>
</dbReference>
<dbReference type="PROSITE" id="PS50075">
    <property type="entry name" value="CARRIER"/>
    <property type="match status" value="1"/>
</dbReference>
<feature type="chain" id="PRO_0000452938" description="Nonribosomal peptide synthetase hkm11">
    <location>
        <begin position="1"/>
        <end position="1305"/>
    </location>
</feature>
<feature type="domain" description="Carrier" evidence="2 6">
    <location>
        <begin position="788"/>
        <end position="864"/>
    </location>
</feature>
<feature type="region of interest" description="Adenylation" evidence="1 6">
    <location>
        <begin position="278"/>
        <end position="672"/>
    </location>
</feature>
<feature type="region of interest" description="Condensation" evidence="1 6">
    <location>
        <begin position="926"/>
        <end position="1166"/>
    </location>
</feature>
<feature type="modified residue" description="O-(pantetheine 4'-phosphoryl)serine" evidence="2">
    <location>
        <position position="825"/>
    </location>
</feature>
<comment type="function">
    <text evidence="3 6">Nonribosomal peptide synthetase; part of the gene cluster that mediates the biosynthesis of hancockiamides, an unusual new family of N-cinnamoylated piperazines (PubMed:33242032). The NRPS hkm10 and the NmrA-like reductase hkm9 are proposed to convert two molecules of L-Phe to the intermediary piperazine called xenocockiamide A (Probable). Xenocockiamide A is then converted to hancockiamide D via a series of hydroxylations and O-methylations (Probable). The tyrosinase hkm6 may catalyze an aromatic hydroxylation, then the 2-oxoglutarate-dependent Fe(II) dioxygenase hkm4 and the FAD-dependent phenol hydroxylase hkm7 may catalyze consecutive hydroxylations to install 2 more hydroxy groups, and the methyltransferase hkm8 probably catalyzes two methylations using 2 molecules of S-adenosyl-L-methionine (SAM) (Probable). The NRPS hkm11 activates and transfers trans-cinnamate supplied by the PAL hkm12 to hancockiamide D and produces hancockiamide A (PubMed:33242032). NRPS Hkm11 has the flexibility to tolerate the bulky hancockiamide G as a substrate and the absence of the acetyl-transferase hkm3 opens up the opportunity for hkm11 to introduce a second N-cinnamoyl moiety (PubMed:33242032). The cytochrome P450 monooxygenase hkm5 catalyzes the methylenedioxy bridge formation, converting hancockiamide A into hancockiamide G (PubMed:33242032). Hkm5 can also convert hancockiamide B into hancockiamide C, and hancockiamide D into hancockiamide H (PubMed:33242032). The N-acetyltransferase hkm3 finally transfers an acetyl group to 1-N of piperazine, converting hancockiamide A into hancockiamide B and hancockiamide G into hancockiamide C (PubMed:33242032).</text>
</comment>
<comment type="catalytic activity">
    <reaction evidence="3">
        <text>hancockiamide D + (E)-cinnamate + ATP = hancockiamide A + AMP + diphosphate</text>
        <dbReference type="Rhea" id="RHEA:81083"/>
        <dbReference type="ChEBI" id="CHEBI:15669"/>
        <dbReference type="ChEBI" id="CHEBI:30616"/>
        <dbReference type="ChEBI" id="CHEBI:33019"/>
        <dbReference type="ChEBI" id="CHEBI:231787"/>
        <dbReference type="ChEBI" id="CHEBI:231788"/>
        <dbReference type="ChEBI" id="CHEBI:456215"/>
    </reaction>
    <physiologicalReaction direction="left-to-right" evidence="3">
        <dbReference type="Rhea" id="RHEA:81084"/>
    </physiologicalReaction>
</comment>
<comment type="catalytic activity">
    <reaction evidence="3">
        <text>hancockiamide H + (E)-cinnamate + ATP = hancockiamide G + AMP + diphosphate</text>
        <dbReference type="Rhea" id="RHEA:81135"/>
        <dbReference type="ChEBI" id="CHEBI:15669"/>
        <dbReference type="ChEBI" id="CHEBI:30616"/>
        <dbReference type="ChEBI" id="CHEBI:33019"/>
        <dbReference type="ChEBI" id="CHEBI:231789"/>
        <dbReference type="ChEBI" id="CHEBI:231794"/>
        <dbReference type="ChEBI" id="CHEBI:456215"/>
    </reaction>
    <physiologicalReaction direction="left-to-right" evidence="3">
        <dbReference type="Rhea" id="RHEA:81136"/>
    </physiologicalReaction>
</comment>
<comment type="pathway">
    <text evidence="3">Secondary metabolite biosynthesis.</text>
</comment>
<comment type="domain">
    <text evidence="6">NRP synthetases are composed of discrete domains (adenylation (A), thiolation (T) or peptidyl carrier protein (PCP) and condensation (C) domains) which when grouped together are referred to as a single module. Each module is responsible for the recognition (via the A domain) and incorporation of a single amino acid into the growing peptide product. Thus, an NRP synthetase is generally composed of one or more modules and can terminate in a thioesterase domain (TE) that releases the newly synthesized peptide from the enzyme. Occasionally, epimerase (E) domains (responsible for l- to d- amino acid conversion) are present within the NRP synthetase. Hkm11 has the following architecture: A-T-C.</text>
</comment>
<comment type="biotechnology">
    <text evidence="3">Hancockiamide D displays potent cytotoxic activity against murine myeloma NS-1 cells, suggesting a potential antitumour application (PubMed:33242032). More interestingly, hancockiamide C, the likely end metabolite of the hkm pathway, shows potent Arabidopsis thaliana seed anti-germination activity, but is inactive against the monocot Eragrostis tef seed, suggesting that it could be a herbicidal lead targeting monocots (PubMed:33242032). The herbicidal activity of hancockiamide C could be due to its phenylpropanoid-like structural features, which may act on the plant lignan pathways, and hence warrants further investigations (PubMed:33242032).</text>
</comment>
<comment type="similarity">
    <text evidence="5">Belongs to the NRP synthetase family.</text>
</comment>
<organism>
    <name type="scientific">Aspergillus hancockii</name>
    <dbReference type="NCBI Taxonomy" id="1873369"/>
    <lineage>
        <taxon>Eukaryota</taxon>
        <taxon>Fungi</taxon>
        <taxon>Dikarya</taxon>
        <taxon>Ascomycota</taxon>
        <taxon>Pezizomycotina</taxon>
        <taxon>Eurotiomycetes</taxon>
        <taxon>Eurotiomycetidae</taxon>
        <taxon>Eurotiales</taxon>
        <taxon>Aspergillaceae</taxon>
        <taxon>Aspergillus</taxon>
        <taxon>Aspergillus subgen. Circumdati</taxon>
    </lineage>
</organism>
<protein>
    <recommendedName>
        <fullName evidence="4">Nonribosomal peptide synthetase hkm11</fullName>
        <ecNumber evidence="3">6.3.2.-</ecNumber>
    </recommendedName>
    <alternativeName>
        <fullName evidence="4">Hancockiamides biosynthesis cluster protein 11</fullName>
    </alternativeName>
</protein>